<protein>
    <recommendedName>
        <fullName evidence="1">UPF0763 protein HPSH_03535</fullName>
    </recommendedName>
</protein>
<comment type="similarity">
    <text evidence="1">Belongs to the UPF0763 family.</text>
</comment>
<reference key="1">
    <citation type="submission" date="2008-05" db="EMBL/GenBank/DDBJ databases">
        <title>Genome sequence of Helicobacter pylori from the remote Amazon: traces of Asian ancestry of the first Americans.</title>
        <authorList>
            <person name="Kersulyte D."/>
            <person name="Kalia A."/>
            <person name="Gilman R.H."/>
            <person name="Berg D.E."/>
        </authorList>
    </citation>
    <scope>NUCLEOTIDE SEQUENCE [LARGE SCALE GENOMIC DNA]</scope>
    <source>
        <strain>Shi470</strain>
    </source>
</reference>
<accession>B2UTG2</accession>
<dbReference type="EMBL" id="CP001072">
    <property type="protein sequence ID" value="ACD48144.1"/>
    <property type="molecule type" value="Genomic_DNA"/>
</dbReference>
<dbReference type="RefSeq" id="WP_000413482.1">
    <property type="nucleotide sequence ID" value="NC_010698.2"/>
</dbReference>
<dbReference type="KEGG" id="hps:HPSH_03535"/>
<dbReference type="HOGENOM" id="CLU_120359_0_0_7"/>
<dbReference type="HAMAP" id="MF_02110">
    <property type="entry name" value="UPF0763"/>
    <property type="match status" value="1"/>
</dbReference>
<dbReference type="InterPro" id="IPR019724">
    <property type="entry name" value="UPF0763"/>
</dbReference>
<dbReference type="Pfam" id="PF10788">
    <property type="entry name" value="DUF2603"/>
    <property type="match status" value="1"/>
</dbReference>
<organism>
    <name type="scientific">Helicobacter pylori (strain Shi470)</name>
    <dbReference type="NCBI Taxonomy" id="512562"/>
    <lineage>
        <taxon>Bacteria</taxon>
        <taxon>Pseudomonadati</taxon>
        <taxon>Campylobacterota</taxon>
        <taxon>Epsilonproteobacteria</taxon>
        <taxon>Campylobacterales</taxon>
        <taxon>Helicobacteraceae</taxon>
        <taxon>Helicobacter</taxon>
    </lineage>
</organism>
<feature type="chain" id="PRO_0000394792" description="UPF0763 protein HPSH_03535">
    <location>
        <begin position="1"/>
        <end position="171"/>
    </location>
</feature>
<name>Y3535_HELPS</name>
<gene>
    <name type="ordered locus">HPSH_03535</name>
</gene>
<sequence length="171" mass="20060">MEKLPKKRVSKTKSQKLINSLTTQKNRAFLKKISASEMLLELEKGAFKKNEAYFISDEEDKNYVLVPDNVISLLAENARKAFEARLRAELERDIITQAPIDFEDVREVSLQLLENLRQKDGNLPNINTLNFVKQIKKEHPNLFFNFDNMFKQPPFNENNFENFDNSDEENF</sequence>
<proteinExistence type="inferred from homology"/>
<evidence type="ECO:0000255" key="1">
    <source>
        <dbReference type="HAMAP-Rule" id="MF_02110"/>
    </source>
</evidence>